<accession>A0LKV6</accession>
<reference key="1">
    <citation type="submission" date="2006-10" db="EMBL/GenBank/DDBJ databases">
        <title>Complete sequence of Syntrophobacter fumaroxidans MPOB.</title>
        <authorList>
            <consortium name="US DOE Joint Genome Institute"/>
            <person name="Copeland A."/>
            <person name="Lucas S."/>
            <person name="Lapidus A."/>
            <person name="Barry K."/>
            <person name="Detter J.C."/>
            <person name="Glavina del Rio T."/>
            <person name="Hammon N."/>
            <person name="Israni S."/>
            <person name="Pitluck S."/>
            <person name="Goltsman E.G."/>
            <person name="Martinez M."/>
            <person name="Schmutz J."/>
            <person name="Larimer F."/>
            <person name="Land M."/>
            <person name="Hauser L."/>
            <person name="Kyrpides N."/>
            <person name="Kim E."/>
            <person name="Boone D.R."/>
            <person name="Brockman F."/>
            <person name="Culley D."/>
            <person name="Ferry J."/>
            <person name="Gunsalus R."/>
            <person name="McInerney M.J."/>
            <person name="Morrison M."/>
            <person name="Plugge C."/>
            <person name="Rohlin L."/>
            <person name="Scholten J."/>
            <person name="Sieber J."/>
            <person name="Stams A.J.M."/>
            <person name="Worm P."/>
            <person name="Henstra A.M."/>
            <person name="Richardson P."/>
        </authorList>
    </citation>
    <scope>NUCLEOTIDE SEQUENCE [LARGE SCALE GENOMIC DNA]</scope>
    <source>
        <strain>DSM 10017 / MPOB</strain>
    </source>
</reference>
<protein>
    <recommendedName>
        <fullName evidence="1">Imidazolonepropionase</fullName>
        <ecNumber evidence="1">3.5.2.7</ecNumber>
    </recommendedName>
    <alternativeName>
        <fullName evidence="1">Imidazolone-5-propionate hydrolase</fullName>
    </alternativeName>
</protein>
<gene>
    <name evidence="1" type="primary">hutI</name>
    <name type="ordered locus">Sfum_2377</name>
</gene>
<evidence type="ECO:0000255" key="1">
    <source>
        <dbReference type="HAMAP-Rule" id="MF_00372"/>
    </source>
</evidence>
<proteinExistence type="inferred from homology"/>
<feature type="chain" id="PRO_0000306532" description="Imidazolonepropionase">
    <location>
        <begin position="1"/>
        <end position="424"/>
    </location>
</feature>
<feature type="binding site" evidence="1">
    <location>
        <position position="81"/>
    </location>
    <ligand>
        <name>Fe(3+)</name>
        <dbReference type="ChEBI" id="CHEBI:29034"/>
    </ligand>
</feature>
<feature type="binding site" evidence="1">
    <location>
        <position position="81"/>
    </location>
    <ligand>
        <name>Zn(2+)</name>
        <dbReference type="ChEBI" id="CHEBI:29105"/>
    </ligand>
</feature>
<feature type="binding site" evidence="1">
    <location>
        <position position="83"/>
    </location>
    <ligand>
        <name>Fe(3+)</name>
        <dbReference type="ChEBI" id="CHEBI:29034"/>
    </ligand>
</feature>
<feature type="binding site" evidence="1">
    <location>
        <position position="83"/>
    </location>
    <ligand>
        <name>Zn(2+)</name>
        <dbReference type="ChEBI" id="CHEBI:29105"/>
    </ligand>
</feature>
<feature type="binding site" evidence="1">
    <location>
        <position position="90"/>
    </location>
    <ligand>
        <name>4-imidazolone-5-propanoate</name>
        <dbReference type="ChEBI" id="CHEBI:77893"/>
    </ligand>
</feature>
<feature type="binding site" evidence="1">
    <location>
        <position position="153"/>
    </location>
    <ligand>
        <name>4-imidazolone-5-propanoate</name>
        <dbReference type="ChEBI" id="CHEBI:77893"/>
    </ligand>
</feature>
<feature type="binding site" evidence="1">
    <location>
        <position position="153"/>
    </location>
    <ligand>
        <name>N-formimidoyl-L-glutamate</name>
        <dbReference type="ChEBI" id="CHEBI:58928"/>
    </ligand>
</feature>
<feature type="binding site" evidence="1">
    <location>
        <position position="186"/>
    </location>
    <ligand>
        <name>4-imidazolone-5-propanoate</name>
        <dbReference type="ChEBI" id="CHEBI:77893"/>
    </ligand>
</feature>
<feature type="binding site" evidence="1">
    <location>
        <position position="251"/>
    </location>
    <ligand>
        <name>Fe(3+)</name>
        <dbReference type="ChEBI" id="CHEBI:29034"/>
    </ligand>
</feature>
<feature type="binding site" evidence="1">
    <location>
        <position position="251"/>
    </location>
    <ligand>
        <name>Zn(2+)</name>
        <dbReference type="ChEBI" id="CHEBI:29105"/>
    </ligand>
</feature>
<feature type="binding site" evidence="1">
    <location>
        <position position="254"/>
    </location>
    <ligand>
        <name>4-imidazolone-5-propanoate</name>
        <dbReference type="ChEBI" id="CHEBI:77893"/>
    </ligand>
</feature>
<feature type="binding site" evidence="1">
    <location>
        <position position="325"/>
    </location>
    <ligand>
        <name>Fe(3+)</name>
        <dbReference type="ChEBI" id="CHEBI:29034"/>
    </ligand>
</feature>
<feature type="binding site" evidence="1">
    <location>
        <position position="325"/>
    </location>
    <ligand>
        <name>Zn(2+)</name>
        <dbReference type="ChEBI" id="CHEBI:29105"/>
    </ligand>
</feature>
<feature type="binding site" evidence="1">
    <location>
        <position position="327"/>
    </location>
    <ligand>
        <name>N-formimidoyl-L-glutamate</name>
        <dbReference type="ChEBI" id="CHEBI:58928"/>
    </ligand>
</feature>
<feature type="binding site" evidence="1">
    <location>
        <position position="329"/>
    </location>
    <ligand>
        <name>N-formimidoyl-L-glutamate</name>
        <dbReference type="ChEBI" id="CHEBI:58928"/>
    </ligand>
</feature>
<feature type="binding site" evidence="1">
    <location>
        <position position="330"/>
    </location>
    <ligand>
        <name>4-imidazolone-5-propanoate</name>
        <dbReference type="ChEBI" id="CHEBI:77893"/>
    </ligand>
</feature>
<comment type="function">
    <text evidence="1">Catalyzes the hydrolytic cleavage of the carbon-nitrogen bond in imidazolone-5-propanoate to yield N-formimidoyl-L-glutamate. It is the third step in the universal histidine degradation pathway.</text>
</comment>
<comment type="catalytic activity">
    <reaction evidence="1">
        <text>4-imidazolone-5-propanoate + H2O = N-formimidoyl-L-glutamate</text>
        <dbReference type="Rhea" id="RHEA:23660"/>
        <dbReference type="ChEBI" id="CHEBI:15377"/>
        <dbReference type="ChEBI" id="CHEBI:58928"/>
        <dbReference type="ChEBI" id="CHEBI:77893"/>
        <dbReference type="EC" id="3.5.2.7"/>
    </reaction>
</comment>
<comment type="cofactor">
    <cofactor evidence="1">
        <name>Zn(2+)</name>
        <dbReference type="ChEBI" id="CHEBI:29105"/>
    </cofactor>
    <cofactor evidence="1">
        <name>Fe(3+)</name>
        <dbReference type="ChEBI" id="CHEBI:29034"/>
    </cofactor>
    <text evidence="1">Binds 1 zinc or iron ion per subunit.</text>
</comment>
<comment type="pathway">
    <text evidence="1">Amino-acid degradation; L-histidine degradation into L-glutamate; N-formimidoyl-L-glutamate from L-histidine: step 3/3.</text>
</comment>
<comment type="subcellular location">
    <subcellularLocation>
        <location evidence="1">Cytoplasm</location>
    </subcellularLocation>
</comment>
<comment type="similarity">
    <text evidence="1">Belongs to the metallo-dependent hydrolases superfamily. HutI family.</text>
</comment>
<name>HUTI_SYNFM</name>
<dbReference type="EC" id="3.5.2.7" evidence="1"/>
<dbReference type="EMBL" id="CP000478">
    <property type="protein sequence ID" value="ABK18058.1"/>
    <property type="molecule type" value="Genomic_DNA"/>
</dbReference>
<dbReference type="RefSeq" id="WP_011699226.1">
    <property type="nucleotide sequence ID" value="NC_008554.1"/>
</dbReference>
<dbReference type="SMR" id="A0LKV6"/>
<dbReference type="STRING" id="335543.Sfum_2377"/>
<dbReference type="KEGG" id="sfu:Sfum_2377"/>
<dbReference type="eggNOG" id="COG1228">
    <property type="taxonomic scope" value="Bacteria"/>
</dbReference>
<dbReference type="HOGENOM" id="CLU_041647_0_1_7"/>
<dbReference type="InParanoid" id="A0LKV6"/>
<dbReference type="OrthoDB" id="9807210at2"/>
<dbReference type="UniPathway" id="UPA00379">
    <property type="reaction ID" value="UER00551"/>
</dbReference>
<dbReference type="Proteomes" id="UP000001784">
    <property type="component" value="Chromosome"/>
</dbReference>
<dbReference type="GO" id="GO:0005737">
    <property type="term" value="C:cytoplasm"/>
    <property type="evidence" value="ECO:0007669"/>
    <property type="project" value="UniProtKB-SubCell"/>
</dbReference>
<dbReference type="GO" id="GO:0050480">
    <property type="term" value="F:imidazolonepropionase activity"/>
    <property type="evidence" value="ECO:0007669"/>
    <property type="project" value="UniProtKB-UniRule"/>
</dbReference>
<dbReference type="GO" id="GO:0005506">
    <property type="term" value="F:iron ion binding"/>
    <property type="evidence" value="ECO:0007669"/>
    <property type="project" value="UniProtKB-UniRule"/>
</dbReference>
<dbReference type="GO" id="GO:0008270">
    <property type="term" value="F:zinc ion binding"/>
    <property type="evidence" value="ECO:0007669"/>
    <property type="project" value="UniProtKB-UniRule"/>
</dbReference>
<dbReference type="GO" id="GO:0019556">
    <property type="term" value="P:L-histidine catabolic process to glutamate and formamide"/>
    <property type="evidence" value="ECO:0007669"/>
    <property type="project" value="UniProtKB-UniPathway"/>
</dbReference>
<dbReference type="GO" id="GO:0019557">
    <property type="term" value="P:L-histidine catabolic process to glutamate and formate"/>
    <property type="evidence" value="ECO:0007669"/>
    <property type="project" value="UniProtKB-UniPathway"/>
</dbReference>
<dbReference type="CDD" id="cd01296">
    <property type="entry name" value="Imidazolone-5PH"/>
    <property type="match status" value="1"/>
</dbReference>
<dbReference type="FunFam" id="3.20.20.140:FF:000007">
    <property type="entry name" value="Imidazolonepropionase"/>
    <property type="match status" value="1"/>
</dbReference>
<dbReference type="Gene3D" id="3.20.20.140">
    <property type="entry name" value="Metal-dependent hydrolases"/>
    <property type="match status" value="1"/>
</dbReference>
<dbReference type="Gene3D" id="2.30.40.10">
    <property type="entry name" value="Urease, subunit C, domain 1"/>
    <property type="match status" value="1"/>
</dbReference>
<dbReference type="HAMAP" id="MF_00372">
    <property type="entry name" value="HutI"/>
    <property type="match status" value="1"/>
</dbReference>
<dbReference type="InterPro" id="IPR006680">
    <property type="entry name" value="Amidohydro-rel"/>
</dbReference>
<dbReference type="InterPro" id="IPR005920">
    <property type="entry name" value="HutI"/>
</dbReference>
<dbReference type="InterPro" id="IPR011059">
    <property type="entry name" value="Metal-dep_hydrolase_composite"/>
</dbReference>
<dbReference type="InterPro" id="IPR032466">
    <property type="entry name" value="Metal_Hydrolase"/>
</dbReference>
<dbReference type="NCBIfam" id="TIGR01224">
    <property type="entry name" value="hutI"/>
    <property type="match status" value="1"/>
</dbReference>
<dbReference type="PANTHER" id="PTHR42752">
    <property type="entry name" value="IMIDAZOLONEPROPIONASE"/>
    <property type="match status" value="1"/>
</dbReference>
<dbReference type="PANTHER" id="PTHR42752:SF1">
    <property type="entry name" value="IMIDAZOLONEPROPIONASE-RELATED"/>
    <property type="match status" value="1"/>
</dbReference>
<dbReference type="Pfam" id="PF01979">
    <property type="entry name" value="Amidohydro_1"/>
    <property type="match status" value="1"/>
</dbReference>
<dbReference type="SUPFAM" id="SSF51338">
    <property type="entry name" value="Composite domain of metallo-dependent hydrolases"/>
    <property type="match status" value="1"/>
</dbReference>
<dbReference type="SUPFAM" id="SSF51556">
    <property type="entry name" value="Metallo-dependent hydrolases"/>
    <property type="match status" value="1"/>
</dbReference>
<keyword id="KW-0963">Cytoplasm</keyword>
<keyword id="KW-0369">Histidine metabolism</keyword>
<keyword id="KW-0378">Hydrolase</keyword>
<keyword id="KW-0408">Iron</keyword>
<keyword id="KW-0479">Metal-binding</keyword>
<keyword id="KW-1185">Reference proteome</keyword>
<keyword id="KW-0862">Zinc</keyword>
<sequence length="424" mass="45592">MSRKLFRNGRIFTPTDRGVPLAGKHQGDVIHIPRGAIYAKDGVIEAVGDEREVLAGISAGQVDEEIDCRGYCVIPGFVDPHTHMCFAKTREEEFLLRIEGMEYLEILGRGGGILSSVRAARAATEDELFAFTRKHVMTALGLGTTTLEIKSGYGLDTESELRMLRVIERIGRETPLDVVPTFLGAHAIPEEHVAHPDGYVDLVVHEMLPAVARHSGAVFCDVFCEAGVFSVAQSRRVLEAARGVGLELKIHTDEVHDLGGSALAAELRATSAEHLLRTSETNLRAMAEAGVVGILLPATAYSLRRRYAPARRMVELGLPVAVATDCNPGTAYTESMPFVYGLAVLGMGLSMQEALVAATLNGAYAIGQGGRVGSLEVGKSADFLLLDGKSPAILAYHIGVSPVVEVYKQANPMRQWEGITGDHP</sequence>
<organism>
    <name type="scientific">Syntrophobacter fumaroxidans (strain DSM 10017 / MPOB)</name>
    <dbReference type="NCBI Taxonomy" id="335543"/>
    <lineage>
        <taxon>Bacteria</taxon>
        <taxon>Pseudomonadati</taxon>
        <taxon>Thermodesulfobacteriota</taxon>
        <taxon>Syntrophobacteria</taxon>
        <taxon>Syntrophobacterales</taxon>
        <taxon>Syntrophobacteraceae</taxon>
        <taxon>Syntrophobacter</taxon>
    </lineage>
</organism>